<sequence>MNDMGEVQREKVAVIIGPTAVGKTKLSIDLAKALNGEIISGDSMQIYRTMDIGTAKVTKEEMDGIPHYMVDIKNPEESFSVAEFQERVRKHIREITERGKLPIIVGGTGLYIQSVLFDYQFTDDAGDAIYREQMEKLALERGVEYVHKKLQEVDPESAERIHANNVRRVIRALEIFHTSGEKMSDQLEKQENELLYDVSLIGLTMDREMLYDRINLRVDIMMDQGLLEEVEGLYNRGIRDCQSIQAIGYKEIYDYFEDRVSLEEAVSQLKTNSRRYAKRQLTWFRNKMDVTWFDVTDGEKTSEILRYIEGKLQLKSNNSK</sequence>
<name>MIAA_BACAH</name>
<dbReference type="EC" id="2.5.1.75" evidence="1"/>
<dbReference type="EMBL" id="CP000485">
    <property type="protein sequence ID" value="ABK86581.1"/>
    <property type="molecule type" value="Genomic_DNA"/>
</dbReference>
<dbReference type="SMR" id="A0RH88"/>
<dbReference type="KEGG" id="btl:BALH_3341"/>
<dbReference type="HOGENOM" id="CLU_032616_0_1_9"/>
<dbReference type="GO" id="GO:0005524">
    <property type="term" value="F:ATP binding"/>
    <property type="evidence" value="ECO:0007669"/>
    <property type="project" value="UniProtKB-UniRule"/>
</dbReference>
<dbReference type="GO" id="GO:0052381">
    <property type="term" value="F:tRNA dimethylallyltransferase activity"/>
    <property type="evidence" value="ECO:0007669"/>
    <property type="project" value="UniProtKB-UniRule"/>
</dbReference>
<dbReference type="GO" id="GO:0006400">
    <property type="term" value="P:tRNA modification"/>
    <property type="evidence" value="ECO:0007669"/>
    <property type="project" value="TreeGrafter"/>
</dbReference>
<dbReference type="FunFam" id="1.10.20.140:FF:000001">
    <property type="entry name" value="tRNA dimethylallyltransferase"/>
    <property type="match status" value="1"/>
</dbReference>
<dbReference type="Gene3D" id="1.10.20.140">
    <property type="match status" value="1"/>
</dbReference>
<dbReference type="Gene3D" id="3.40.50.300">
    <property type="entry name" value="P-loop containing nucleotide triphosphate hydrolases"/>
    <property type="match status" value="1"/>
</dbReference>
<dbReference type="HAMAP" id="MF_00185">
    <property type="entry name" value="IPP_trans"/>
    <property type="match status" value="1"/>
</dbReference>
<dbReference type="InterPro" id="IPR039657">
    <property type="entry name" value="Dimethylallyltransferase"/>
</dbReference>
<dbReference type="InterPro" id="IPR018022">
    <property type="entry name" value="IPT"/>
</dbReference>
<dbReference type="InterPro" id="IPR027417">
    <property type="entry name" value="P-loop_NTPase"/>
</dbReference>
<dbReference type="NCBIfam" id="TIGR00174">
    <property type="entry name" value="miaA"/>
    <property type="match status" value="1"/>
</dbReference>
<dbReference type="PANTHER" id="PTHR11088">
    <property type="entry name" value="TRNA DIMETHYLALLYLTRANSFERASE"/>
    <property type="match status" value="1"/>
</dbReference>
<dbReference type="PANTHER" id="PTHR11088:SF60">
    <property type="entry name" value="TRNA DIMETHYLALLYLTRANSFERASE"/>
    <property type="match status" value="1"/>
</dbReference>
<dbReference type="Pfam" id="PF01715">
    <property type="entry name" value="IPPT"/>
    <property type="match status" value="1"/>
</dbReference>
<dbReference type="SUPFAM" id="SSF52540">
    <property type="entry name" value="P-loop containing nucleoside triphosphate hydrolases"/>
    <property type="match status" value="2"/>
</dbReference>
<proteinExistence type="inferred from homology"/>
<gene>
    <name evidence="1" type="primary">miaA</name>
    <name type="ordered locus">BALH_3341</name>
</gene>
<reference key="1">
    <citation type="journal article" date="2007" name="J. Bacteriol.">
        <title>The complete genome sequence of Bacillus thuringiensis Al Hakam.</title>
        <authorList>
            <person name="Challacombe J.F."/>
            <person name="Altherr M.R."/>
            <person name="Xie G."/>
            <person name="Bhotika S.S."/>
            <person name="Brown N."/>
            <person name="Bruce D."/>
            <person name="Campbell C.S."/>
            <person name="Campbell M.L."/>
            <person name="Chen J."/>
            <person name="Chertkov O."/>
            <person name="Cleland C."/>
            <person name="Dimitrijevic M."/>
            <person name="Doggett N.A."/>
            <person name="Fawcett J.J."/>
            <person name="Glavina T."/>
            <person name="Goodwin L.A."/>
            <person name="Green L.D."/>
            <person name="Han C.S."/>
            <person name="Hill K.K."/>
            <person name="Hitchcock P."/>
            <person name="Jackson P.J."/>
            <person name="Keim P."/>
            <person name="Kewalramani A.R."/>
            <person name="Longmire J."/>
            <person name="Lucas S."/>
            <person name="Malfatti S."/>
            <person name="Martinez D."/>
            <person name="McMurry K."/>
            <person name="Meincke L.J."/>
            <person name="Misra M."/>
            <person name="Moseman B.L."/>
            <person name="Mundt M."/>
            <person name="Munk A.C."/>
            <person name="Okinaka R.T."/>
            <person name="Parson-Quintana B."/>
            <person name="Reilly L.P."/>
            <person name="Richardson P."/>
            <person name="Robinson D.L."/>
            <person name="Saunders E."/>
            <person name="Tapia R."/>
            <person name="Tesmer J.G."/>
            <person name="Thayer N."/>
            <person name="Thompson L.S."/>
            <person name="Tice H."/>
            <person name="Ticknor L.O."/>
            <person name="Wills P.L."/>
            <person name="Gilna P."/>
            <person name="Brettin T.S."/>
        </authorList>
    </citation>
    <scope>NUCLEOTIDE SEQUENCE [LARGE SCALE GENOMIC DNA]</scope>
    <source>
        <strain>Al Hakam</strain>
    </source>
</reference>
<comment type="function">
    <text evidence="1">Catalyzes the transfer of a dimethylallyl group onto the adenine at position 37 in tRNAs that read codons beginning with uridine, leading to the formation of N6-(dimethylallyl)adenosine (i(6)A).</text>
</comment>
<comment type="catalytic activity">
    <reaction evidence="1">
        <text>adenosine(37) in tRNA + dimethylallyl diphosphate = N(6)-dimethylallyladenosine(37) in tRNA + diphosphate</text>
        <dbReference type="Rhea" id="RHEA:26482"/>
        <dbReference type="Rhea" id="RHEA-COMP:10162"/>
        <dbReference type="Rhea" id="RHEA-COMP:10375"/>
        <dbReference type="ChEBI" id="CHEBI:33019"/>
        <dbReference type="ChEBI" id="CHEBI:57623"/>
        <dbReference type="ChEBI" id="CHEBI:74411"/>
        <dbReference type="ChEBI" id="CHEBI:74415"/>
        <dbReference type="EC" id="2.5.1.75"/>
    </reaction>
</comment>
<comment type="cofactor">
    <cofactor evidence="1">
        <name>Mg(2+)</name>
        <dbReference type="ChEBI" id="CHEBI:18420"/>
    </cofactor>
</comment>
<comment type="subunit">
    <text evidence="1">Monomer.</text>
</comment>
<comment type="similarity">
    <text evidence="1">Belongs to the IPP transferase family.</text>
</comment>
<organism>
    <name type="scientific">Bacillus thuringiensis (strain Al Hakam)</name>
    <dbReference type="NCBI Taxonomy" id="412694"/>
    <lineage>
        <taxon>Bacteria</taxon>
        <taxon>Bacillati</taxon>
        <taxon>Bacillota</taxon>
        <taxon>Bacilli</taxon>
        <taxon>Bacillales</taxon>
        <taxon>Bacillaceae</taxon>
        <taxon>Bacillus</taxon>
        <taxon>Bacillus cereus group</taxon>
    </lineage>
</organism>
<evidence type="ECO:0000255" key="1">
    <source>
        <dbReference type="HAMAP-Rule" id="MF_00185"/>
    </source>
</evidence>
<keyword id="KW-0067">ATP-binding</keyword>
<keyword id="KW-0460">Magnesium</keyword>
<keyword id="KW-0547">Nucleotide-binding</keyword>
<keyword id="KW-0808">Transferase</keyword>
<keyword id="KW-0819">tRNA processing</keyword>
<accession>A0RH88</accession>
<feature type="chain" id="PRO_0000377076" description="tRNA dimethylallyltransferase">
    <location>
        <begin position="1"/>
        <end position="320"/>
    </location>
</feature>
<feature type="region of interest" description="Interaction with substrate tRNA" evidence="1">
    <location>
        <begin position="42"/>
        <end position="45"/>
    </location>
</feature>
<feature type="binding site" evidence="1">
    <location>
        <begin position="17"/>
        <end position="24"/>
    </location>
    <ligand>
        <name>ATP</name>
        <dbReference type="ChEBI" id="CHEBI:30616"/>
    </ligand>
</feature>
<feature type="binding site" evidence="1">
    <location>
        <begin position="19"/>
        <end position="24"/>
    </location>
    <ligand>
        <name>substrate</name>
    </ligand>
</feature>
<feature type="site" description="Interaction with substrate tRNA" evidence="1">
    <location>
        <position position="108"/>
    </location>
</feature>
<feature type="site" description="Interaction with substrate tRNA" evidence="1">
    <location>
        <position position="131"/>
    </location>
</feature>
<protein>
    <recommendedName>
        <fullName evidence="1">tRNA dimethylallyltransferase</fullName>
        <ecNumber evidence="1">2.5.1.75</ecNumber>
    </recommendedName>
    <alternativeName>
        <fullName evidence="1">Dimethylallyl diphosphate:tRNA dimethylallyltransferase</fullName>
        <shortName evidence="1">DMAPP:tRNA dimethylallyltransferase</shortName>
        <shortName evidence="1">DMATase</shortName>
    </alternativeName>
    <alternativeName>
        <fullName evidence="1">Isopentenyl-diphosphate:tRNA isopentenyltransferase</fullName>
        <shortName evidence="1">IPP transferase</shortName>
        <shortName evidence="1">IPPT</shortName>
        <shortName evidence="1">IPTase</shortName>
    </alternativeName>
</protein>